<comment type="subunit">
    <text evidence="1">May interact with FAM168B.</text>
</comment>
<comment type="subcellular location">
    <subcellularLocation>
        <location evidence="1">Nucleus</location>
        <location evidence="1">Nucleolus</location>
    </subcellularLocation>
</comment>
<comment type="tissue specificity">
    <text evidence="3">Detected in testis, heart, brain, spleen, lung and liver.</text>
</comment>
<comment type="similarity">
    <text evidence="4">Belongs to the yippee family.</text>
</comment>
<evidence type="ECO:0000250" key="1"/>
<evidence type="ECO:0000255" key="2">
    <source>
        <dbReference type="PROSITE-ProRule" id="PRU01128"/>
    </source>
</evidence>
<evidence type="ECO:0000269" key="3">
    <source>
    </source>
</evidence>
<evidence type="ECO:0000305" key="4"/>
<gene>
    <name type="primary">Ypel2</name>
</gene>
<keyword id="KW-0479">Metal-binding</keyword>
<keyword id="KW-0539">Nucleus</keyword>
<keyword id="KW-1185">Reference proteome</keyword>
<keyword id="KW-0862">Zinc</keyword>
<sequence length="119" mass="13577">MVKMTRSKTFQAYLPSCHRTYSCIHCRAHLANHDELISKSFQGSQGRAYLFNSVVNVGCGPAEERVLLTGLHAVADIYCENCKTTLGWKYEHAFESSQKYKEGKYIIELAHMIKDNGWD</sequence>
<protein>
    <recommendedName>
        <fullName>Protein yippee-like 2</fullName>
    </recommendedName>
</protein>
<feature type="chain" id="PRO_0000212386" description="Protein yippee-like 2">
    <location>
        <begin position="1"/>
        <end position="119"/>
    </location>
</feature>
<feature type="domain" description="Yippee" evidence="2">
    <location>
        <begin position="19"/>
        <end position="116"/>
    </location>
</feature>
<feature type="binding site" evidence="2">
    <location>
        <position position="23"/>
    </location>
    <ligand>
        <name>Zn(2+)</name>
        <dbReference type="ChEBI" id="CHEBI:29105"/>
    </ligand>
</feature>
<feature type="binding site" evidence="2">
    <location>
        <position position="26"/>
    </location>
    <ligand>
        <name>Zn(2+)</name>
        <dbReference type="ChEBI" id="CHEBI:29105"/>
    </ligand>
</feature>
<feature type="binding site" evidence="2">
    <location>
        <position position="79"/>
    </location>
    <ligand>
        <name>Zn(2+)</name>
        <dbReference type="ChEBI" id="CHEBI:29105"/>
    </ligand>
</feature>
<feature type="binding site" evidence="2">
    <location>
        <position position="82"/>
    </location>
    <ligand>
        <name>Zn(2+)</name>
        <dbReference type="ChEBI" id="CHEBI:29105"/>
    </ligand>
</feature>
<organism>
    <name type="scientific">Mus musculus</name>
    <name type="common">Mouse</name>
    <dbReference type="NCBI Taxonomy" id="10090"/>
    <lineage>
        <taxon>Eukaryota</taxon>
        <taxon>Metazoa</taxon>
        <taxon>Chordata</taxon>
        <taxon>Craniata</taxon>
        <taxon>Vertebrata</taxon>
        <taxon>Euteleostomi</taxon>
        <taxon>Mammalia</taxon>
        <taxon>Eutheria</taxon>
        <taxon>Euarchontoglires</taxon>
        <taxon>Glires</taxon>
        <taxon>Rodentia</taxon>
        <taxon>Myomorpha</taxon>
        <taxon>Muroidea</taxon>
        <taxon>Muridae</taxon>
        <taxon>Murinae</taxon>
        <taxon>Mus</taxon>
        <taxon>Mus</taxon>
    </lineage>
</organism>
<name>YPEL2_MOUSE</name>
<proteinExistence type="evidence at transcript level"/>
<accession>Q65Z95</accession>
<dbReference type="EMBL" id="AB098741">
    <property type="protein sequence ID" value="BAD51382.1"/>
    <property type="molecule type" value="mRNA"/>
</dbReference>
<dbReference type="EMBL" id="AL596111">
    <property type="status" value="NOT_ANNOTATED_CDS"/>
    <property type="molecule type" value="Genomic_DNA"/>
</dbReference>
<dbReference type="CCDS" id="CCDS25205.1"/>
<dbReference type="RefSeq" id="NP_001005341.1">
    <property type="nucleotide sequence ID" value="NM_001005341.4"/>
</dbReference>
<dbReference type="RefSeq" id="NP_001423145.1">
    <property type="nucleotide sequence ID" value="NM_001436216.1"/>
</dbReference>
<dbReference type="SMR" id="Q65Z95"/>
<dbReference type="BioGRID" id="218983">
    <property type="interactions" value="1"/>
</dbReference>
<dbReference type="FunCoup" id="Q65Z95">
    <property type="interactions" value="73"/>
</dbReference>
<dbReference type="STRING" id="10090.ENSMUSP00000018571"/>
<dbReference type="PhosphoSitePlus" id="Q65Z95"/>
<dbReference type="PaxDb" id="10090-ENSMUSP00000018571"/>
<dbReference type="ProteomicsDB" id="299633"/>
<dbReference type="Antibodypedia" id="56995">
    <property type="antibodies" value="25 antibodies from 15 providers"/>
</dbReference>
<dbReference type="Ensembl" id="ENSMUST00000018571.5">
    <property type="protein sequence ID" value="ENSMUSP00000018571.5"/>
    <property type="gene ID" value="ENSMUSG00000018427.9"/>
</dbReference>
<dbReference type="GeneID" id="77864"/>
<dbReference type="KEGG" id="mmu:77864"/>
<dbReference type="UCSC" id="uc007ktd.1">
    <property type="organism name" value="mouse"/>
</dbReference>
<dbReference type="AGR" id="MGI:1925114"/>
<dbReference type="CTD" id="388403"/>
<dbReference type="MGI" id="MGI:1925114">
    <property type="gene designation" value="Ypel2"/>
</dbReference>
<dbReference type="VEuPathDB" id="HostDB:ENSMUSG00000018427"/>
<dbReference type="eggNOG" id="KOG3399">
    <property type="taxonomic scope" value="Eukaryota"/>
</dbReference>
<dbReference type="GeneTree" id="ENSGT00940000159010"/>
<dbReference type="HOGENOM" id="CLU_043857_5_2_1"/>
<dbReference type="InParanoid" id="Q65Z95"/>
<dbReference type="OMA" id="SSRIYGC"/>
<dbReference type="PhylomeDB" id="Q65Z95"/>
<dbReference type="TreeFam" id="TF313936"/>
<dbReference type="BioGRID-ORCS" id="77864">
    <property type="hits" value="2 hits in 77 CRISPR screens"/>
</dbReference>
<dbReference type="ChiTaRS" id="Ypel2">
    <property type="organism name" value="mouse"/>
</dbReference>
<dbReference type="PRO" id="PR:Q65Z95"/>
<dbReference type="Proteomes" id="UP000000589">
    <property type="component" value="Chromosome 11"/>
</dbReference>
<dbReference type="RNAct" id="Q65Z95">
    <property type="molecule type" value="protein"/>
</dbReference>
<dbReference type="Bgee" id="ENSMUSG00000018427">
    <property type="expression patterns" value="Expressed in cumulus cell and 232 other cell types or tissues"/>
</dbReference>
<dbReference type="ExpressionAtlas" id="Q65Z95">
    <property type="expression patterns" value="baseline and differential"/>
</dbReference>
<dbReference type="GO" id="GO:0005730">
    <property type="term" value="C:nucleolus"/>
    <property type="evidence" value="ECO:0007669"/>
    <property type="project" value="UniProtKB-SubCell"/>
</dbReference>
<dbReference type="GO" id="GO:0046872">
    <property type="term" value="F:metal ion binding"/>
    <property type="evidence" value="ECO:0007669"/>
    <property type="project" value="UniProtKB-KW"/>
</dbReference>
<dbReference type="InterPro" id="IPR034751">
    <property type="entry name" value="Yippee"/>
</dbReference>
<dbReference type="InterPro" id="IPR004910">
    <property type="entry name" value="Yippee/Mis18/Cereblon"/>
</dbReference>
<dbReference type="InterPro" id="IPR039058">
    <property type="entry name" value="Yippee_fam"/>
</dbReference>
<dbReference type="PANTHER" id="PTHR13848">
    <property type="entry name" value="PROTEIN YIPPEE-LIKE CG15309-RELATED"/>
    <property type="match status" value="1"/>
</dbReference>
<dbReference type="Pfam" id="PF03226">
    <property type="entry name" value="Yippee-Mis18"/>
    <property type="match status" value="1"/>
</dbReference>
<dbReference type="PROSITE" id="PS51792">
    <property type="entry name" value="YIPPEE"/>
    <property type="match status" value="1"/>
</dbReference>
<reference key="1">
    <citation type="journal article" date="2004" name="Gene">
        <title>Identification and characterization of a novel gene family YPEL in a wide spectrum of eukaryotic species.</title>
        <authorList>
            <person name="Hosono K."/>
            <person name="Sasaki T."/>
            <person name="Minoshima S."/>
            <person name="Shimizu N."/>
        </authorList>
    </citation>
    <scope>NUCLEOTIDE SEQUENCE [MRNA]</scope>
    <scope>TISSUE SPECIFICITY</scope>
</reference>
<reference key="2">
    <citation type="journal article" date="2009" name="PLoS Biol.">
        <title>Lineage-specific biology revealed by a finished genome assembly of the mouse.</title>
        <authorList>
            <person name="Church D.M."/>
            <person name="Goodstadt L."/>
            <person name="Hillier L.W."/>
            <person name="Zody M.C."/>
            <person name="Goldstein S."/>
            <person name="She X."/>
            <person name="Bult C.J."/>
            <person name="Agarwala R."/>
            <person name="Cherry J.L."/>
            <person name="DiCuccio M."/>
            <person name="Hlavina W."/>
            <person name="Kapustin Y."/>
            <person name="Meric P."/>
            <person name="Maglott D."/>
            <person name="Birtle Z."/>
            <person name="Marques A.C."/>
            <person name="Graves T."/>
            <person name="Zhou S."/>
            <person name="Teague B."/>
            <person name="Potamousis K."/>
            <person name="Churas C."/>
            <person name="Place M."/>
            <person name="Herschleb J."/>
            <person name="Runnheim R."/>
            <person name="Forrest D."/>
            <person name="Amos-Landgraf J."/>
            <person name="Schwartz D.C."/>
            <person name="Cheng Z."/>
            <person name="Lindblad-Toh K."/>
            <person name="Eichler E.E."/>
            <person name="Ponting C.P."/>
        </authorList>
    </citation>
    <scope>NUCLEOTIDE SEQUENCE [LARGE SCALE GENOMIC DNA]</scope>
    <source>
        <strain>C57BL/6J</strain>
    </source>
</reference>